<dbReference type="EMBL" id="AJ633679">
    <property type="protein sequence ID" value="CAG17898.1"/>
    <property type="molecule type" value="mRNA"/>
</dbReference>
<dbReference type="EMBL" id="AK014544">
    <property type="protein sequence ID" value="BAB29422.1"/>
    <property type="molecule type" value="mRNA"/>
</dbReference>
<dbReference type="EMBL" id="AK028784">
    <property type="protein sequence ID" value="BAC26119.1"/>
    <property type="molecule type" value="mRNA"/>
</dbReference>
<dbReference type="CCDS" id="CCDS26634.1"/>
<dbReference type="RefSeq" id="NP_083154.1">
    <property type="nucleotide sequence ID" value="NM_028878.4"/>
</dbReference>
<dbReference type="SMR" id="Q9D687"/>
<dbReference type="CORUM" id="Q9D687"/>
<dbReference type="DIP" id="DIP-38102N"/>
<dbReference type="FunCoup" id="Q9D687">
    <property type="interactions" value="123"/>
</dbReference>
<dbReference type="IntAct" id="Q9D687">
    <property type="interactions" value="2"/>
</dbReference>
<dbReference type="STRING" id="10090.ENSMUSP00000022048"/>
<dbReference type="TCDB" id="2.A.22.6.3">
    <property type="family name" value="the neurotransmitter:sodium symporter (nss) family"/>
</dbReference>
<dbReference type="GlyCosmos" id="Q9D687">
    <property type="glycosylation" value="6 sites, No reported glycans"/>
</dbReference>
<dbReference type="GlyGen" id="Q9D687">
    <property type="glycosylation" value="6 sites"/>
</dbReference>
<dbReference type="iPTMnet" id="Q9D687"/>
<dbReference type="PhosphoSitePlus" id="Q9D687"/>
<dbReference type="jPOST" id="Q9D687"/>
<dbReference type="PaxDb" id="10090-ENSMUSP00000022048"/>
<dbReference type="ProteomicsDB" id="260808"/>
<dbReference type="Antibodypedia" id="22313">
    <property type="antibodies" value="68 antibodies from 22 providers"/>
</dbReference>
<dbReference type="DNASU" id="74338"/>
<dbReference type="Ensembl" id="ENSMUST00000022048.6">
    <property type="protein sequence ID" value="ENSMUSP00000022048.6"/>
    <property type="gene ID" value="ENSMUSG00000021565.17"/>
</dbReference>
<dbReference type="GeneID" id="74338"/>
<dbReference type="KEGG" id="mmu:74338"/>
<dbReference type="UCSC" id="uc007rdy.1">
    <property type="organism name" value="mouse"/>
</dbReference>
<dbReference type="AGR" id="MGI:1921588"/>
<dbReference type="CTD" id="340024"/>
<dbReference type="MGI" id="MGI:1921588">
    <property type="gene designation" value="Slc6a19"/>
</dbReference>
<dbReference type="VEuPathDB" id="HostDB:ENSMUSG00000021565"/>
<dbReference type="eggNOG" id="KOG3659">
    <property type="taxonomic scope" value="Eukaryota"/>
</dbReference>
<dbReference type="GeneTree" id="ENSGT00940000154896"/>
<dbReference type="HOGENOM" id="CLU_006855_7_2_1"/>
<dbReference type="InParanoid" id="Q9D687"/>
<dbReference type="OMA" id="WPKELIT"/>
<dbReference type="OrthoDB" id="6581954at2759"/>
<dbReference type="PhylomeDB" id="Q9D687"/>
<dbReference type="TreeFam" id="TF343812"/>
<dbReference type="Reactome" id="R-MMU-352230">
    <property type="pathway name" value="Amino acid transport across the plasma membrane"/>
</dbReference>
<dbReference type="Reactome" id="R-MMU-442660">
    <property type="pathway name" value="Na+/Cl- dependent neurotransmitter transporters"/>
</dbReference>
<dbReference type="BioGRID-ORCS" id="74338">
    <property type="hits" value="2 hits in 78 CRISPR screens"/>
</dbReference>
<dbReference type="ChiTaRS" id="Slc6a19">
    <property type="organism name" value="mouse"/>
</dbReference>
<dbReference type="PRO" id="PR:Q9D687"/>
<dbReference type="Proteomes" id="UP000000589">
    <property type="component" value="Chromosome 13"/>
</dbReference>
<dbReference type="RNAct" id="Q9D687">
    <property type="molecule type" value="protein"/>
</dbReference>
<dbReference type="Bgee" id="ENSMUSG00000021565">
    <property type="expression patterns" value="Expressed in small intestine Peyer's patch and 66 other cell types or tissues"/>
</dbReference>
<dbReference type="ExpressionAtlas" id="Q9D687">
    <property type="expression patterns" value="baseline and differential"/>
</dbReference>
<dbReference type="GO" id="GO:0016324">
    <property type="term" value="C:apical plasma membrane"/>
    <property type="evidence" value="ECO:0000314"/>
    <property type="project" value="UniProtKB"/>
</dbReference>
<dbReference type="GO" id="GO:0031526">
    <property type="term" value="C:brush border membrane"/>
    <property type="evidence" value="ECO:0000314"/>
    <property type="project" value="UniProtKB"/>
</dbReference>
<dbReference type="GO" id="GO:0005886">
    <property type="term" value="C:plasma membrane"/>
    <property type="evidence" value="ECO:0000250"/>
    <property type="project" value="MGI"/>
</dbReference>
<dbReference type="GO" id="GO:0015175">
    <property type="term" value="F:neutral L-amino acid transmembrane transporter activity"/>
    <property type="evidence" value="ECO:0000314"/>
    <property type="project" value="UniProtKB"/>
</dbReference>
<dbReference type="GO" id="GO:0015293">
    <property type="term" value="F:symporter activity"/>
    <property type="evidence" value="ECO:0007669"/>
    <property type="project" value="UniProtKB-KW"/>
</dbReference>
<dbReference type="GO" id="GO:0015804">
    <property type="term" value="P:neutral amino acid transport"/>
    <property type="evidence" value="ECO:0000314"/>
    <property type="project" value="MGI"/>
</dbReference>
<dbReference type="GO" id="GO:0007584">
    <property type="term" value="P:response to nutrient"/>
    <property type="evidence" value="ECO:0007669"/>
    <property type="project" value="Ensembl"/>
</dbReference>
<dbReference type="InterPro" id="IPR000175">
    <property type="entry name" value="Na/ntran_symport"/>
</dbReference>
<dbReference type="InterPro" id="IPR002438">
    <property type="entry name" value="Neutral_aa_SLC6"/>
</dbReference>
<dbReference type="InterPro" id="IPR037272">
    <property type="entry name" value="SNS_sf"/>
</dbReference>
<dbReference type="NCBIfam" id="NF037979">
    <property type="entry name" value="Na_transp"/>
    <property type="match status" value="1"/>
</dbReference>
<dbReference type="PANTHER" id="PTHR11616:SF125">
    <property type="entry name" value="SODIUM-DEPENDENT NEUTRAL AMINO ACID TRANSPORTER B(0)AT1"/>
    <property type="match status" value="1"/>
</dbReference>
<dbReference type="PANTHER" id="PTHR11616">
    <property type="entry name" value="SODIUM/CHLORIDE DEPENDENT TRANSPORTER"/>
    <property type="match status" value="1"/>
</dbReference>
<dbReference type="Pfam" id="PF00209">
    <property type="entry name" value="SNF"/>
    <property type="match status" value="1"/>
</dbReference>
<dbReference type="PRINTS" id="PR00176">
    <property type="entry name" value="NANEUSMPORT"/>
</dbReference>
<dbReference type="PRINTS" id="PR01206">
    <property type="entry name" value="ORPHTRNSPORT"/>
</dbReference>
<dbReference type="SUPFAM" id="SSF161070">
    <property type="entry name" value="SNF-like"/>
    <property type="match status" value="1"/>
</dbReference>
<dbReference type="PROSITE" id="PS00610">
    <property type="entry name" value="NA_NEUROTRAN_SYMP_1"/>
    <property type="match status" value="1"/>
</dbReference>
<dbReference type="PROSITE" id="PS50267">
    <property type="entry name" value="NA_NEUROTRAN_SYMP_3"/>
    <property type="match status" value="1"/>
</dbReference>
<protein>
    <recommendedName>
        <fullName>Sodium-dependent neutral amino acid transporter B(0)AT1</fullName>
    </recommendedName>
    <alternativeName>
        <fullName>Solute carrier family 6 member 19</fullName>
    </alternativeName>
    <alternativeName>
        <fullName>System B(0) neutral amino acid transporter AT1</fullName>
    </alternativeName>
</protein>
<gene>
    <name type="primary">Slc6a19</name>
    <name type="synonym">B0at1</name>
    <name evidence="10" type="synonym">Xt3</name>
</gene>
<feature type="chain" id="PRO_0000214810" description="Sodium-dependent neutral amino acid transporter B(0)AT1">
    <location>
        <begin position="1"/>
        <end position="634"/>
    </location>
</feature>
<feature type="topological domain" description="Cytoplasmic" evidence="2">
    <location>
        <begin position="1"/>
        <end position="41"/>
    </location>
</feature>
<feature type="transmembrane region" description="Helical; Name=1" evidence="2">
    <location>
        <begin position="42"/>
        <end position="62"/>
    </location>
</feature>
<feature type="topological domain" description="Extracellular" evidence="2">
    <location>
        <begin position="63"/>
        <end position="67"/>
    </location>
</feature>
<feature type="transmembrane region" description="Helical; Name=2" evidence="2">
    <location>
        <begin position="68"/>
        <end position="88"/>
    </location>
</feature>
<feature type="topological domain" description="Cytoplasmic" evidence="2">
    <location>
        <begin position="89"/>
        <end position="119"/>
    </location>
</feature>
<feature type="transmembrane region" description="Helical; Name=3" evidence="2">
    <location>
        <begin position="120"/>
        <end position="140"/>
    </location>
</feature>
<feature type="topological domain" description="Extracellular" evidence="2">
    <location>
        <begin position="141"/>
        <end position="192"/>
    </location>
</feature>
<feature type="transmembrane region" description="Helical; Name=4" evidence="2">
    <location>
        <begin position="193"/>
        <end position="213"/>
    </location>
</feature>
<feature type="topological domain" description="Cytoplasmic" evidence="2">
    <location>
        <begin position="214"/>
        <end position="221"/>
    </location>
</feature>
<feature type="transmembrane region" description="Helical; Name=5" evidence="2">
    <location>
        <begin position="222"/>
        <end position="242"/>
    </location>
</feature>
<feature type="topological domain" description="Extracellular" evidence="2">
    <location>
        <begin position="243"/>
        <end position="268"/>
    </location>
</feature>
<feature type="transmembrane region" description="Helical; Name=6" evidence="2">
    <location>
        <begin position="269"/>
        <end position="289"/>
    </location>
</feature>
<feature type="topological domain" description="Cytoplasmic" evidence="2">
    <location>
        <begin position="290"/>
        <end position="304"/>
    </location>
</feature>
<feature type="transmembrane region" description="Helical; Name=7" evidence="2">
    <location>
        <begin position="305"/>
        <end position="325"/>
    </location>
</feature>
<feature type="topological domain" description="Extracellular" evidence="2">
    <location>
        <begin position="326"/>
        <end position="413"/>
    </location>
</feature>
<feature type="transmembrane region" description="Helical; Name=8" evidence="2">
    <location>
        <begin position="414"/>
        <end position="434"/>
    </location>
</feature>
<feature type="topological domain" description="Cytoplasmic" evidence="2">
    <location>
        <begin position="435"/>
        <end position="456"/>
    </location>
</feature>
<feature type="transmembrane region" description="Helical; Name=9" evidence="2">
    <location>
        <begin position="457"/>
        <end position="477"/>
    </location>
</feature>
<feature type="topological domain" description="Extracellular" evidence="2">
    <location>
        <begin position="478"/>
        <end position="487"/>
    </location>
</feature>
<feature type="transmembrane region" description="Helical; Name=10" evidence="2">
    <location>
        <begin position="488"/>
        <end position="508"/>
    </location>
</feature>
<feature type="topological domain" description="Cytoplasmic" evidence="2">
    <location>
        <begin position="509"/>
        <end position="531"/>
    </location>
</feature>
<feature type="transmembrane region" description="Helical; Name=11" evidence="2">
    <location>
        <begin position="532"/>
        <end position="552"/>
    </location>
</feature>
<feature type="topological domain" description="Extracellular" evidence="2">
    <location>
        <begin position="553"/>
        <end position="581"/>
    </location>
</feature>
<feature type="transmembrane region" description="Helical; Name=12" evidence="2">
    <location>
        <begin position="582"/>
        <end position="602"/>
    </location>
</feature>
<feature type="topological domain" description="Cytoplasmic" evidence="2">
    <location>
        <begin position="603"/>
        <end position="634"/>
    </location>
</feature>
<feature type="modified residue" description="Phosphoserine" evidence="12">
    <location>
        <position position="17"/>
    </location>
</feature>
<feature type="modified residue" description="Phosphoserine" evidence="12">
    <location>
        <position position="627"/>
    </location>
</feature>
<feature type="glycosylation site" description="N-linked (GlcNAc...) asparagine" evidence="2">
    <location>
        <position position="158"/>
    </location>
</feature>
<feature type="glycosylation site" description="N-linked (GlcNAc...) asparagine" evidence="2">
    <location>
        <position position="182"/>
    </location>
</feature>
<feature type="glycosylation site" description="N-linked (GlcNAc...) asparagine" evidence="2">
    <location>
        <position position="258"/>
    </location>
</feature>
<feature type="glycosylation site" description="N-linked (GlcNAc...) asparagine" evidence="2">
    <location>
        <position position="354"/>
    </location>
</feature>
<feature type="glycosylation site" description="N-linked (GlcNAc...) asparagine" evidence="2">
    <location>
        <position position="368"/>
    </location>
</feature>
<feature type="glycosylation site" description="N-linked (GlcNAc...) asparagine" evidence="2">
    <location>
        <position position="555"/>
    </location>
</feature>
<accession>Q9D687</accession>
<evidence type="ECO:0000250" key="1">
    <source>
        <dbReference type="UniProtKB" id="Q695T7"/>
    </source>
</evidence>
<evidence type="ECO:0000255" key="2"/>
<evidence type="ECO:0000269" key="3">
    <source>
    </source>
</evidence>
<evidence type="ECO:0000269" key="4">
    <source>
    </source>
</evidence>
<evidence type="ECO:0000269" key="5">
    <source>
    </source>
</evidence>
<evidence type="ECO:0000269" key="6">
    <source>
    </source>
</evidence>
<evidence type="ECO:0000269" key="7">
    <source>
    </source>
</evidence>
<evidence type="ECO:0000269" key="8">
    <source>
    </source>
</evidence>
<evidence type="ECO:0000269" key="9">
    <source>
    </source>
</evidence>
<evidence type="ECO:0000303" key="10">
    <source>
    </source>
</evidence>
<evidence type="ECO:0000305" key="11"/>
<evidence type="ECO:0007744" key="12">
    <source>
    </source>
</evidence>
<reference key="1">
    <citation type="journal article" date="2004" name="J. Biol. Chem.">
        <title>Molecular cloning of mouse amino acid transport system B(0), a neutral amino acid transporter related to Hartnup disorder.</title>
        <authorList>
            <person name="Broeer A."/>
            <person name="Klingel K."/>
            <person name="Kowalczuk S."/>
            <person name="Rasko J.E.J."/>
            <person name="Cavanaugh J.A."/>
            <person name="Broeer S."/>
        </authorList>
    </citation>
    <scope>NUCLEOTIDE SEQUENCE [MRNA]</scope>
    <scope>FUNCTION</scope>
    <scope>TRANSPORTER ACTIVITY</scope>
    <scope>TISSUE SPECIFICITY</scope>
    <scope>BIOPHYSICOCHEMICAL PROPERTIES</scope>
    <source>
        <strain>NMRI</strain>
        <tissue>Kidney</tissue>
    </source>
</reference>
<reference key="2">
    <citation type="journal article" date="2005" name="Science">
        <title>The transcriptional landscape of the mammalian genome.</title>
        <authorList>
            <person name="Carninci P."/>
            <person name="Kasukawa T."/>
            <person name="Katayama S."/>
            <person name="Gough J."/>
            <person name="Frith M.C."/>
            <person name="Maeda N."/>
            <person name="Oyama R."/>
            <person name="Ravasi T."/>
            <person name="Lenhard B."/>
            <person name="Wells C."/>
            <person name="Kodzius R."/>
            <person name="Shimokawa K."/>
            <person name="Bajic V.B."/>
            <person name="Brenner S.E."/>
            <person name="Batalov S."/>
            <person name="Forrest A.R."/>
            <person name="Zavolan M."/>
            <person name="Davis M.J."/>
            <person name="Wilming L.G."/>
            <person name="Aidinis V."/>
            <person name="Allen J.E."/>
            <person name="Ambesi-Impiombato A."/>
            <person name="Apweiler R."/>
            <person name="Aturaliya R.N."/>
            <person name="Bailey T.L."/>
            <person name="Bansal M."/>
            <person name="Baxter L."/>
            <person name="Beisel K.W."/>
            <person name="Bersano T."/>
            <person name="Bono H."/>
            <person name="Chalk A.M."/>
            <person name="Chiu K.P."/>
            <person name="Choudhary V."/>
            <person name="Christoffels A."/>
            <person name="Clutterbuck D.R."/>
            <person name="Crowe M.L."/>
            <person name="Dalla E."/>
            <person name="Dalrymple B.P."/>
            <person name="de Bono B."/>
            <person name="Della Gatta G."/>
            <person name="di Bernardo D."/>
            <person name="Down T."/>
            <person name="Engstrom P."/>
            <person name="Fagiolini M."/>
            <person name="Faulkner G."/>
            <person name="Fletcher C.F."/>
            <person name="Fukushima T."/>
            <person name="Furuno M."/>
            <person name="Futaki S."/>
            <person name="Gariboldi M."/>
            <person name="Georgii-Hemming P."/>
            <person name="Gingeras T.R."/>
            <person name="Gojobori T."/>
            <person name="Green R.E."/>
            <person name="Gustincich S."/>
            <person name="Harbers M."/>
            <person name="Hayashi Y."/>
            <person name="Hensch T.K."/>
            <person name="Hirokawa N."/>
            <person name="Hill D."/>
            <person name="Huminiecki L."/>
            <person name="Iacono M."/>
            <person name="Ikeo K."/>
            <person name="Iwama A."/>
            <person name="Ishikawa T."/>
            <person name="Jakt M."/>
            <person name="Kanapin A."/>
            <person name="Katoh M."/>
            <person name="Kawasawa Y."/>
            <person name="Kelso J."/>
            <person name="Kitamura H."/>
            <person name="Kitano H."/>
            <person name="Kollias G."/>
            <person name="Krishnan S.P."/>
            <person name="Kruger A."/>
            <person name="Kummerfeld S.K."/>
            <person name="Kurochkin I.V."/>
            <person name="Lareau L.F."/>
            <person name="Lazarevic D."/>
            <person name="Lipovich L."/>
            <person name="Liu J."/>
            <person name="Liuni S."/>
            <person name="McWilliam S."/>
            <person name="Madan Babu M."/>
            <person name="Madera M."/>
            <person name="Marchionni L."/>
            <person name="Matsuda H."/>
            <person name="Matsuzawa S."/>
            <person name="Miki H."/>
            <person name="Mignone F."/>
            <person name="Miyake S."/>
            <person name="Morris K."/>
            <person name="Mottagui-Tabar S."/>
            <person name="Mulder N."/>
            <person name="Nakano N."/>
            <person name="Nakauchi H."/>
            <person name="Ng P."/>
            <person name="Nilsson R."/>
            <person name="Nishiguchi S."/>
            <person name="Nishikawa S."/>
            <person name="Nori F."/>
            <person name="Ohara O."/>
            <person name="Okazaki Y."/>
            <person name="Orlando V."/>
            <person name="Pang K.C."/>
            <person name="Pavan W.J."/>
            <person name="Pavesi G."/>
            <person name="Pesole G."/>
            <person name="Petrovsky N."/>
            <person name="Piazza S."/>
            <person name="Reed J."/>
            <person name="Reid J.F."/>
            <person name="Ring B.Z."/>
            <person name="Ringwald M."/>
            <person name="Rost B."/>
            <person name="Ruan Y."/>
            <person name="Salzberg S.L."/>
            <person name="Sandelin A."/>
            <person name="Schneider C."/>
            <person name="Schoenbach C."/>
            <person name="Sekiguchi K."/>
            <person name="Semple C.A."/>
            <person name="Seno S."/>
            <person name="Sessa L."/>
            <person name="Sheng Y."/>
            <person name="Shibata Y."/>
            <person name="Shimada H."/>
            <person name="Shimada K."/>
            <person name="Silva D."/>
            <person name="Sinclair B."/>
            <person name="Sperling S."/>
            <person name="Stupka E."/>
            <person name="Sugiura K."/>
            <person name="Sultana R."/>
            <person name="Takenaka Y."/>
            <person name="Taki K."/>
            <person name="Tammoja K."/>
            <person name="Tan S.L."/>
            <person name="Tang S."/>
            <person name="Taylor M.S."/>
            <person name="Tegner J."/>
            <person name="Teichmann S.A."/>
            <person name="Ueda H.R."/>
            <person name="van Nimwegen E."/>
            <person name="Verardo R."/>
            <person name="Wei C.L."/>
            <person name="Yagi K."/>
            <person name="Yamanishi H."/>
            <person name="Zabarovsky E."/>
            <person name="Zhu S."/>
            <person name="Zimmer A."/>
            <person name="Hide W."/>
            <person name="Bult C."/>
            <person name="Grimmond S.M."/>
            <person name="Teasdale R.D."/>
            <person name="Liu E.T."/>
            <person name="Brusic V."/>
            <person name="Quackenbush J."/>
            <person name="Wahlestedt C."/>
            <person name="Mattick J.S."/>
            <person name="Hume D.A."/>
            <person name="Kai C."/>
            <person name="Sasaki D."/>
            <person name="Tomaru Y."/>
            <person name="Fukuda S."/>
            <person name="Kanamori-Katayama M."/>
            <person name="Suzuki M."/>
            <person name="Aoki J."/>
            <person name="Arakawa T."/>
            <person name="Iida J."/>
            <person name="Imamura K."/>
            <person name="Itoh M."/>
            <person name="Kato T."/>
            <person name="Kawaji H."/>
            <person name="Kawagashira N."/>
            <person name="Kawashima T."/>
            <person name="Kojima M."/>
            <person name="Kondo S."/>
            <person name="Konno H."/>
            <person name="Nakano K."/>
            <person name="Ninomiya N."/>
            <person name="Nishio T."/>
            <person name="Okada M."/>
            <person name="Plessy C."/>
            <person name="Shibata K."/>
            <person name="Shiraki T."/>
            <person name="Suzuki S."/>
            <person name="Tagami M."/>
            <person name="Waki K."/>
            <person name="Watahiki A."/>
            <person name="Okamura-Oho Y."/>
            <person name="Suzuki H."/>
            <person name="Kawai J."/>
            <person name="Hayashizaki Y."/>
        </authorList>
    </citation>
    <scope>NUCLEOTIDE SEQUENCE [LARGE SCALE MRNA]</scope>
    <source>
        <strain>C57BL/6J</strain>
        <tissue>Skin</tissue>
    </source>
</reference>
<reference key="3">
    <citation type="journal article" date="2005" name="Biochem. J.">
        <title>Characterization of mouse amino acid transporter B(0)AT1 (Slc6a19).</title>
        <authorList>
            <person name="Boehmer C."/>
            <person name="Broeer A."/>
            <person name="Munzinger M."/>
            <person name="Kowalczuk S."/>
            <person name="Rasko J.E.J."/>
            <person name="Lang F."/>
            <person name="Broeer S."/>
        </authorList>
    </citation>
    <scope>CHARACTERIZATION</scope>
</reference>
<reference key="4">
    <citation type="journal article" date="2010" name="Cell">
        <title>A tissue-specific atlas of mouse protein phosphorylation and expression.</title>
        <authorList>
            <person name="Huttlin E.L."/>
            <person name="Jedrychowski M.P."/>
            <person name="Elias J.E."/>
            <person name="Goswami T."/>
            <person name="Rad R."/>
            <person name="Beausoleil S.A."/>
            <person name="Villen J."/>
            <person name="Haas W."/>
            <person name="Sowa M.E."/>
            <person name="Gygi S.P."/>
        </authorList>
    </citation>
    <scope>PHOSPHORYLATION [LARGE SCALE ANALYSIS] AT SER-17 AND SER-627</scope>
    <scope>IDENTIFICATION BY MASS SPECTROMETRY [LARGE SCALE ANALYSIS]</scope>
    <source>
        <tissue>Kidney</tissue>
    </source>
</reference>
<reference key="5">
    <citation type="journal article" date="2006" name="Nature">
        <title>Essential role for collectrin in renal amino acid transport.</title>
        <authorList>
            <person name="Danilczyk U."/>
            <person name="Sarao R."/>
            <person name="Remy C."/>
            <person name="Benabbas C."/>
            <person name="Stange G."/>
            <person name="Richter A."/>
            <person name="Arya S."/>
            <person name="Pospisilik J.A."/>
            <person name="Singer D."/>
            <person name="Camargo S.M."/>
            <person name="Makrides V."/>
            <person name="Ramadan T."/>
            <person name="Verrey F."/>
            <person name="Wagner C.A."/>
            <person name="Penninger J.M."/>
        </authorList>
    </citation>
    <scope>INTERACTION WITH CLTRN</scope>
    <scope>FUNCTION</scope>
    <scope>TRANSPORTER ACTIVITY</scope>
    <scope>BIOPHYSICOCHEMICAL PROPERTIES</scope>
</reference>
<reference key="6">
    <citation type="journal article" date="2008" name="FASEB J.">
        <title>A protein complex in the brush-border membrane explains a Hartnup disorder allele.</title>
        <authorList>
            <person name="Kowalczuk S."/>
            <person name="Broeer A."/>
            <person name="Tietze N."/>
            <person name="Vanslambrouck J.M."/>
            <person name="Rasko J.E."/>
            <person name="Broeer S."/>
        </authorList>
    </citation>
    <scope>FUNCTION</scope>
    <scope>SUBCELLULAR LOCATION</scope>
</reference>
<reference key="7">
    <citation type="journal article" date="2009" name="Gastroenterology">
        <title>Tissue-specific amino acid transporter partners ACE2 and collectrin differentially interact with hartnup mutations.</title>
        <authorList>
            <person name="Camargo S.M."/>
            <person name="Singer D."/>
            <person name="Makrides V."/>
            <person name="Huggel K."/>
            <person name="Pos K.M."/>
            <person name="Wagner C.A."/>
            <person name="Kuba K."/>
            <person name="Danilczyk U."/>
            <person name="Skovby F."/>
            <person name="Kleta R."/>
            <person name="Penninger J.M."/>
            <person name="Verrey F."/>
        </authorList>
    </citation>
    <scope>FUNCTION</scope>
    <scope>INTERACTION WITH ACE2</scope>
    <scope>SUBCELLULAR LOCATION</scope>
    <scope>TISSUE SPECIFICITY</scope>
</reference>
<reference key="8">
    <citation type="journal article" date="2011" name="J. Biol. Chem.">
        <title>Impaired nutrient signaling and body weight control in a Na+ neutral amino acid cotransporter (Slc6a19)-deficient mouse.</title>
        <authorList>
            <person name="Broeer A."/>
            <person name="Juelich T."/>
            <person name="Vanslambrouck J.M."/>
            <person name="Tietze N."/>
            <person name="Solomon P.S."/>
            <person name="Holst J."/>
            <person name="Bailey C.G."/>
            <person name="Rasko J.E."/>
            <person name="Broeer S."/>
        </authorList>
    </citation>
    <scope>DISRUPTION PHENOTYPE</scope>
    <scope>SUBCELLULAR LOCATION</scope>
    <scope>FUNCTION</scope>
    <scope>TISSUE SPECIFICITY</scope>
</reference>
<reference key="9">
    <citation type="journal article" date="2012" name="Biochem. J.">
        <title>Intestinal peptidases form functional complexes with the neutral amino acid transporter B(0)AT1.</title>
        <authorList>
            <person name="Fairweather S.J."/>
            <person name="Broeer A."/>
            <person name="O'Mara M.L."/>
            <person name="Broeer S."/>
        </authorList>
    </citation>
    <scope>INTERACTION WITH ANPEP</scope>
    <scope>TISSUE SPECIFICITY</scope>
</reference>
<reference key="10">
    <citation type="journal article" date="2015" name="J. Biol. Chem.">
        <title>Molecular basis for the interaction of the mammalian amino acid transporters B0AT1 and B0AT3 with their ancillary protein collectrin.</title>
        <authorList>
            <person name="Fairweather S.J."/>
            <person name="Broeer A."/>
            <person name="Subramanian N."/>
            <person name="Tumer E."/>
            <person name="Cheng Q."/>
            <person name="Schmoll D."/>
            <person name="O'Mara M.L."/>
            <person name="Broeer S."/>
        </authorList>
    </citation>
    <scope>FUNCTION</scope>
</reference>
<comment type="function">
    <text evidence="3 4 5 6 7 8 9">Transporter that mediates resorption of neutral amino acids across the apical membrane of renal and intestinal epithelial cells (PubMed:15044460, PubMed:17167413, PubMed:18424768, PubMed:19185582, PubMed:26240152). This uptake is sodium-dependent and chloride-independent (PubMed:15044460, PubMed:18424768, PubMed:19185582, PubMed:21636576, PubMed:26240152). Requires CLTRN in kidney or ACE2 in intestine for cell surface expression and amino acid transporter activity (PubMed:17167413, PubMed:18424768, PubMed:19185582, PubMed:22677001).</text>
</comment>
<comment type="catalytic activity">
    <reaction evidence="1">
        <text>L-alanine(in) + Na(+)(in) = L-alanine(out) + Na(+)(out)</text>
        <dbReference type="Rhea" id="RHEA:29283"/>
        <dbReference type="ChEBI" id="CHEBI:29101"/>
        <dbReference type="ChEBI" id="CHEBI:57972"/>
    </reaction>
</comment>
<comment type="catalytic activity">
    <reaction evidence="1">
        <text>L-cysteine(in) + Na(+)(in) = L-cysteine(out) + Na(+)(out)</text>
        <dbReference type="Rhea" id="RHEA:68232"/>
        <dbReference type="ChEBI" id="CHEBI:29101"/>
        <dbReference type="ChEBI" id="CHEBI:35235"/>
    </reaction>
</comment>
<comment type="catalytic activity">
    <reaction evidence="3">
        <text>L-glutamine(in) + Na(+)(in) = L-glutamine(out) + Na(+)(out)</text>
        <dbReference type="Rhea" id="RHEA:68236"/>
        <dbReference type="ChEBI" id="CHEBI:29101"/>
        <dbReference type="ChEBI" id="CHEBI:58359"/>
    </reaction>
</comment>
<comment type="catalytic activity">
    <reaction evidence="1">
        <text>glycine(in) + Na(+)(in) = glycine(out) + Na(+)(out)</text>
        <dbReference type="Rhea" id="RHEA:68228"/>
        <dbReference type="ChEBI" id="CHEBI:29101"/>
        <dbReference type="ChEBI" id="CHEBI:57305"/>
    </reaction>
</comment>
<comment type="catalytic activity">
    <reaction evidence="3 4">
        <text>L-isoleucine(in) + Na(+)(in) = L-isoleucine(out) + Na(+)(out)</text>
        <dbReference type="Rhea" id="RHEA:29275"/>
        <dbReference type="ChEBI" id="CHEBI:29101"/>
        <dbReference type="ChEBI" id="CHEBI:58045"/>
    </reaction>
</comment>
<comment type="catalytic activity">
    <reaction evidence="3">
        <text>L-leucine(in) + Na(+)(in) = L-leucine(out) + Na(+)(out)</text>
        <dbReference type="Rhea" id="RHEA:29263"/>
        <dbReference type="ChEBI" id="CHEBI:29101"/>
        <dbReference type="ChEBI" id="CHEBI:57427"/>
    </reaction>
</comment>
<comment type="catalytic activity">
    <reaction evidence="1">
        <text>L-methionine(in) + Na(+)(in) = L-methionine(out) + Na(+)(out)</text>
        <dbReference type="Rhea" id="RHEA:68240"/>
        <dbReference type="ChEBI" id="CHEBI:29101"/>
        <dbReference type="ChEBI" id="CHEBI:57844"/>
    </reaction>
</comment>
<comment type="catalytic activity">
    <reaction evidence="3">
        <text>L-phenylalanine(in) + Na(+)(in) = L-phenylalanine(out) + Na(+)(out)</text>
        <dbReference type="Rhea" id="RHEA:68244"/>
        <dbReference type="ChEBI" id="CHEBI:29101"/>
        <dbReference type="ChEBI" id="CHEBI:58095"/>
    </reaction>
</comment>
<comment type="catalytic activity">
    <reaction evidence="1">
        <text>L-serine(in) + Na(+)(in) = L-serine(out) + Na(+)(out)</text>
        <dbReference type="Rhea" id="RHEA:29575"/>
        <dbReference type="ChEBI" id="CHEBI:29101"/>
        <dbReference type="ChEBI" id="CHEBI:33384"/>
    </reaction>
</comment>
<comment type="catalytic activity">
    <reaction evidence="1">
        <text>L-tryptophan(in) + Na(+)(in) = L-tryptophan(out) + Na(+)(out)</text>
        <dbReference type="Rhea" id="RHEA:68252"/>
        <dbReference type="ChEBI" id="CHEBI:29101"/>
        <dbReference type="ChEBI" id="CHEBI:57912"/>
    </reaction>
</comment>
<comment type="catalytic activity">
    <reaction evidence="1">
        <text>L-tyrosine(in) + Na(+)(in) = L-tyrosine(out) + Na(+)(out)</text>
        <dbReference type="Rhea" id="RHEA:68248"/>
        <dbReference type="ChEBI" id="CHEBI:29101"/>
        <dbReference type="ChEBI" id="CHEBI:58315"/>
    </reaction>
</comment>
<comment type="catalytic activity">
    <reaction evidence="1">
        <text>L-valine(in) + Na(+)(in) = L-valine(out) + Na(+)(out)</text>
        <dbReference type="Rhea" id="RHEA:29267"/>
        <dbReference type="ChEBI" id="CHEBI:29101"/>
        <dbReference type="ChEBI" id="CHEBI:57762"/>
    </reaction>
</comment>
<comment type="biophysicochemical properties">
    <kinetics>
        <KM evidence="3">630 uM for leucine</KM>
        <KM evidence="3">522 uM for glutamine</KM>
        <KM evidence="3">589 uM for phenylalanine</KM>
        <KM evidence="4">0.99 mM for L-isoleucine</KM>
        <KM evidence="4">0.78 mM for L-isoleucine (in presence of CLTRN)</KM>
        <text>Vmax for leucine is about twice the value of Vmax for glutamine, and three times the value of Vmax for phenylalanine. KM and Vmax values are complex functions of the concentration of substrate (L-amino acid) and cosubstrate (Na(+)) and the membrane potential.</text>
    </kinetics>
</comment>
<comment type="subunit">
    <text evidence="4 6 8">Interacts in a tissue-specific manner with ACE2 in small intestine and with CLTRN in the kidney (PubMed:17167413, PubMed:19185582). Interacts with CLTRN; this interaction is required for trafficking of SLC6A19 to the plasma membrane and for its catalytic activation in kidneys (PubMed:17167413). Interacts with ACE2; this interaction is required for trafficking of SLC6A19 to the plasma membrane and for its catalytic activation in intestine (PubMed:19185582). Interacts with ANPEP; the interaction positively regulates its amino acid transporter activity (PubMed:22677001).</text>
</comment>
<comment type="subcellular location">
    <subcellularLocation>
        <location evidence="5">Cell membrane</location>
        <topology evidence="2">Multi-pass membrane protein</topology>
    </subcellularLocation>
    <text evidence="6">Localizes in small intestine brush border membranes (at protein level).</text>
</comment>
<comment type="tissue specificity">
    <text evidence="3 6 8">Predominantly expressed in kidney and small intestine (at protein level) (PubMed:15044460, PubMed:19185582). Expressed in the intestinal brush border (at protein level) (PubMed:22677001). Expression not observed in other organs, such as lung, skeletal muscle, brain, liver and pancreas. In kidney, expression is localized in the renal cortex but not in the medulla. Substantial amounts of expression in the proximal tubules. The distal nephron segments and the glomeruli are consistently negative. In the small intestine, expression is exclusively localized in villus enterocytes. High resolution of the hybridization-positive villi reveals a gradient of expression with the highest levels in apical cells. Not detected in crypt cells or in any other cell types of the small intestine.</text>
</comment>
<comment type="disruption phenotype">
    <text evidence="7">Deficient mice exhibit reduced growth, impaired body weight control, insulin response and amino acid absorption and excretion.</text>
</comment>
<comment type="similarity">
    <text evidence="11">Belongs to the sodium:neurotransmitter symporter (SNF) (TC 2.A.22) family. SLC6A19 subfamily.</text>
</comment>
<keyword id="KW-0029">Amino-acid transport</keyword>
<keyword id="KW-1003">Cell membrane</keyword>
<keyword id="KW-0325">Glycoprotein</keyword>
<keyword id="KW-0472">Membrane</keyword>
<keyword id="KW-0597">Phosphoprotein</keyword>
<keyword id="KW-1185">Reference proteome</keyword>
<keyword id="KW-0769">Symport</keyword>
<keyword id="KW-0812">Transmembrane</keyword>
<keyword id="KW-1133">Transmembrane helix</keyword>
<keyword id="KW-0813">Transport</keyword>
<organism>
    <name type="scientific">Mus musculus</name>
    <name type="common">Mouse</name>
    <dbReference type="NCBI Taxonomy" id="10090"/>
    <lineage>
        <taxon>Eukaryota</taxon>
        <taxon>Metazoa</taxon>
        <taxon>Chordata</taxon>
        <taxon>Craniata</taxon>
        <taxon>Vertebrata</taxon>
        <taxon>Euteleostomi</taxon>
        <taxon>Mammalia</taxon>
        <taxon>Eutheria</taxon>
        <taxon>Euarchontoglires</taxon>
        <taxon>Glires</taxon>
        <taxon>Rodentia</taxon>
        <taxon>Myomorpha</taxon>
        <taxon>Muroidea</taxon>
        <taxon>Muridae</taxon>
        <taxon>Murinae</taxon>
        <taxon>Mus</taxon>
        <taxon>Mus</taxon>
    </lineage>
</organism>
<sequence>MVRLVLPNPGLEERIPSLDELEVIEKEEAGSRPKWDNKAQYMLTCVGFCVGLGNVWRFPYLCQSHGGGAFMIPFLILLVFEGIPLLYLEFAIGQRLRKGSMGVWSSIHPALKGIGIASMFVSFMVGLYYNTIIAWVMWYFFNSFQEPLPWSECPLNQNQTGYVEECAKSSSVDYFWYRETLNISTSISDSGSIQWWILLCLTCAWSVLYVCIIRGIETTGKAVYITSTLPYVVLTIFLIRGLTLKGATNGIVFLFTPNITELSNPNTWLDAGAQVFYSFSLAFGGLISFSSYNSVHNNCEMDSVIVSVINGFTSVYAATVVYSIIGFRATERFDDCVNTNILTLINGFDLPEGNVTSENFEAYQQWCNATNPQAYAQLKFQTCDINSFLSEGVEGTGLAFIVFTEAITKMPVSPLWSVLFFIMLFCLGLSSMFGNMEGVVVPLQDLNITPKKWPKELLTGLICLGTYLIAFIFTLNSGQYWLSLLDSFAGSIPLLIIAFCEMFAVVYVYGVDRFNKDIEFMIGHKPNIFWQVTWRVVSPLIMLVIFLFFFVIEVNKTLMYSIWDPNYEEFPKSQKIPYPNWVYAVVVTVAGVPCLSIPCFAIYKFIRNCCQKSDDHHGLVNTLSTASVNGDLKN</sequence>
<proteinExistence type="evidence at protein level"/>
<name>S6A19_MOUSE</name>